<comment type="function">
    <text>Binds specifically to cytosolic chaperonin (c-CPN) and transfers target proteins to it. Binds to nascent polypeptide chain and promotes folding in an environment in which there are many competing pathways for nonnative proteins.</text>
</comment>
<comment type="subunit">
    <text>Heterohexamer of two PFD-alpha type and four PFD-beta type subunits.</text>
</comment>
<comment type="interaction">
    <interactant intactId="EBI-356919">
        <id>O60925</id>
    </interactant>
    <interactant intactId="EBI-399105">
        <id>Q9NPF5</id>
        <label>DMAP1</label>
    </interactant>
    <organismsDiffer>false</organismsDiffer>
    <experiments>3</experiments>
</comment>
<comment type="interaction">
    <interactant intactId="EBI-356919">
        <id>O60925</id>
    </interactant>
    <interactant intactId="EBI-466061">
        <id>Q9Y2X7</id>
        <label>GIT1</label>
    </interactant>
    <organismsDiffer>false</organismsDiffer>
    <experiments>4</experiments>
</comment>
<comment type="interaction">
    <interactant intactId="EBI-356919">
        <id>O60925</id>
    </interactant>
    <interactant intactId="EBI-359873">
        <id>Q9UHV9</id>
        <label>PFDN2</label>
    </interactant>
    <organismsDiffer>false</organismsDiffer>
    <experiments>5</experiments>
</comment>
<comment type="similarity">
    <text evidence="1">Belongs to the prefoldin subunit beta family.</text>
</comment>
<evidence type="ECO:0000305" key="1"/>
<evidence type="ECO:0007744" key="2">
    <source>
    </source>
</evidence>
<name>PFD1_HUMAN</name>
<sequence>MAAPVDLELKKAFTELQAKVIDTQQKVKLADIQIEQLNRTKKHAHLTDTEIMTLVDETNMYEGVGRMFILQSKEAIHSQLLEKQKIAEEKIKELEQKKSYLERSVKEAEDNIREMLMARRAQ</sequence>
<feature type="initiator methionine" description="Removed" evidence="2">
    <location>
        <position position="1"/>
    </location>
</feature>
<feature type="chain" id="PRO_0000124830" description="Prefoldin subunit 1">
    <location>
        <begin position="2"/>
        <end position="122"/>
    </location>
</feature>
<feature type="modified residue" description="N-acetylalanine" evidence="2">
    <location>
        <position position="2"/>
    </location>
</feature>
<feature type="sequence conflict" description="In Ref. 3; BAD97114." evidence="1" ref="3">
    <original>I</original>
    <variation>V</variation>
    <location>
        <position position="86"/>
    </location>
</feature>
<feature type="sequence conflict" description="In Ref. 1; CAA76759." evidence="1" ref="1">
    <original>SV</original>
    <variation>RL</variation>
    <location>
        <begin position="104"/>
        <end position="105"/>
    </location>
</feature>
<protein>
    <recommendedName>
        <fullName>Prefoldin subunit 1</fullName>
    </recommendedName>
</protein>
<proteinExistence type="evidence at protein level"/>
<dbReference type="EMBL" id="Y17392">
    <property type="protein sequence ID" value="CAA76759.1"/>
    <property type="molecule type" value="mRNA"/>
</dbReference>
<dbReference type="EMBL" id="AK223394">
    <property type="protein sequence ID" value="BAD97114.1"/>
    <property type="molecule type" value="mRNA"/>
</dbReference>
<dbReference type="EMBL" id="AK315353">
    <property type="protein sequence ID" value="BAG37749.1"/>
    <property type="molecule type" value="mRNA"/>
</dbReference>
<dbReference type="EMBL" id="CH471062">
    <property type="protein sequence ID" value="EAW62071.1"/>
    <property type="molecule type" value="Genomic_DNA"/>
</dbReference>
<dbReference type="EMBL" id="BC003620">
    <property type="protein sequence ID" value="AAH03620.1"/>
    <property type="molecule type" value="mRNA"/>
</dbReference>
<dbReference type="EMBL" id="BC006202">
    <property type="protein sequence ID" value="AAH06202.1"/>
    <property type="molecule type" value="mRNA"/>
</dbReference>
<dbReference type="EMBL" id="BC011869">
    <property type="protein sequence ID" value="AAH11869.1"/>
    <property type="molecule type" value="mRNA"/>
</dbReference>
<dbReference type="CCDS" id="CCDS4222.1"/>
<dbReference type="RefSeq" id="NP_002613.2">
    <property type="nucleotide sequence ID" value="NM_002622.4"/>
</dbReference>
<dbReference type="PDB" id="6NR8">
    <property type="method" value="EM"/>
    <property type="resolution" value="7.80 A"/>
    <property type="chains" value="1=12-118"/>
</dbReference>
<dbReference type="PDB" id="6NR9">
    <property type="method" value="EM"/>
    <property type="resolution" value="8.50 A"/>
    <property type="chains" value="1=12-118"/>
</dbReference>
<dbReference type="PDB" id="6NRB">
    <property type="method" value="EM"/>
    <property type="resolution" value="8.70 A"/>
    <property type="chains" value="1=12-118"/>
</dbReference>
<dbReference type="PDB" id="6NRC">
    <property type="method" value="EM"/>
    <property type="resolution" value="8.30 A"/>
    <property type="chains" value="1=12-118"/>
</dbReference>
<dbReference type="PDB" id="6NRD">
    <property type="method" value="EM"/>
    <property type="resolution" value="8.20 A"/>
    <property type="chains" value="1=12-118"/>
</dbReference>
<dbReference type="PDB" id="7WU7">
    <property type="method" value="EM"/>
    <property type="resolution" value="3.85 A"/>
    <property type="chains" value="1=1-122"/>
</dbReference>
<dbReference type="PDBsum" id="6NR8"/>
<dbReference type="PDBsum" id="6NR9"/>
<dbReference type="PDBsum" id="6NRB"/>
<dbReference type="PDBsum" id="6NRC"/>
<dbReference type="PDBsum" id="6NRD"/>
<dbReference type="PDBsum" id="7WU7"/>
<dbReference type="EMDB" id="EMD-0490"/>
<dbReference type="EMDB" id="EMD-0491"/>
<dbReference type="EMDB" id="EMD-0493"/>
<dbReference type="EMDB" id="EMD-0494"/>
<dbReference type="EMDB" id="EMD-0495"/>
<dbReference type="EMDB" id="EMD-32823"/>
<dbReference type="SMR" id="O60925"/>
<dbReference type="BioGRID" id="111223">
    <property type="interactions" value="199"/>
</dbReference>
<dbReference type="ComplexPortal" id="CPX-25767">
    <property type="entry name" value="Prefoldin co-chaperone complex"/>
</dbReference>
<dbReference type="ComplexPortal" id="CPX-6149">
    <property type="entry name" value="Prefoldin co-chaperone complex"/>
</dbReference>
<dbReference type="CORUM" id="O60925"/>
<dbReference type="FunCoup" id="O60925">
    <property type="interactions" value="1522"/>
</dbReference>
<dbReference type="IntAct" id="O60925">
    <property type="interactions" value="122"/>
</dbReference>
<dbReference type="MINT" id="O60925"/>
<dbReference type="STRING" id="9606.ENSP00000261813"/>
<dbReference type="GlyGen" id="O60925">
    <property type="glycosylation" value="3 sites, 1 N-linked glycan (1 site), 1 O-linked glycan (2 sites)"/>
</dbReference>
<dbReference type="iPTMnet" id="O60925"/>
<dbReference type="PhosphoSitePlus" id="O60925"/>
<dbReference type="BioMuta" id="PFDN1"/>
<dbReference type="OGP" id="O60925"/>
<dbReference type="jPOST" id="O60925"/>
<dbReference type="MassIVE" id="O60925"/>
<dbReference type="PaxDb" id="9606-ENSP00000261813"/>
<dbReference type="PeptideAtlas" id="O60925"/>
<dbReference type="ProteomicsDB" id="49671"/>
<dbReference type="Pumba" id="O60925"/>
<dbReference type="TopDownProteomics" id="O60925"/>
<dbReference type="Antibodypedia" id="1773">
    <property type="antibodies" value="301 antibodies from 35 providers"/>
</dbReference>
<dbReference type="DNASU" id="5201"/>
<dbReference type="Ensembl" id="ENST00000261813.9">
    <property type="protein sequence ID" value="ENSP00000261813.4"/>
    <property type="gene ID" value="ENSG00000113068.10"/>
</dbReference>
<dbReference type="GeneID" id="5201"/>
<dbReference type="KEGG" id="hsa:5201"/>
<dbReference type="MANE-Select" id="ENST00000261813.9">
    <property type="protein sequence ID" value="ENSP00000261813.4"/>
    <property type="RefSeq nucleotide sequence ID" value="NM_002622.5"/>
    <property type="RefSeq protein sequence ID" value="NP_002613.2"/>
</dbReference>
<dbReference type="UCSC" id="uc003lff.2">
    <property type="organism name" value="human"/>
</dbReference>
<dbReference type="AGR" id="HGNC:8866"/>
<dbReference type="CTD" id="5201"/>
<dbReference type="DisGeNET" id="5201"/>
<dbReference type="GeneCards" id="PFDN1"/>
<dbReference type="HGNC" id="HGNC:8866">
    <property type="gene designation" value="PFDN1"/>
</dbReference>
<dbReference type="HPA" id="ENSG00000113068">
    <property type="expression patterns" value="Low tissue specificity"/>
</dbReference>
<dbReference type="MIM" id="604897">
    <property type="type" value="gene"/>
</dbReference>
<dbReference type="neXtProt" id="NX_O60925"/>
<dbReference type="OpenTargets" id="ENSG00000113068"/>
<dbReference type="PharmGKB" id="PA33207"/>
<dbReference type="VEuPathDB" id="HostDB:ENSG00000113068"/>
<dbReference type="eggNOG" id="KOG3501">
    <property type="taxonomic scope" value="Eukaryota"/>
</dbReference>
<dbReference type="GeneTree" id="ENSGT00390000009786"/>
<dbReference type="HOGENOM" id="CLU_122140_2_0_1"/>
<dbReference type="InParanoid" id="O60925"/>
<dbReference type="OMA" id="REMIQQK"/>
<dbReference type="OrthoDB" id="5242628at2759"/>
<dbReference type="PAN-GO" id="O60925">
    <property type="GO annotations" value="4 GO annotations based on evolutionary models"/>
</dbReference>
<dbReference type="PhylomeDB" id="O60925"/>
<dbReference type="TreeFam" id="TF106490"/>
<dbReference type="PathwayCommons" id="O60925"/>
<dbReference type="Reactome" id="R-HSA-389957">
    <property type="pathway name" value="Prefoldin mediated transfer of substrate to CCT/TriC"/>
</dbReference>
<dbReference type="SignaLink" id="O60925"/>
<dbReference type="SIGNOR" id="O60925"/>
<dbReference type="BioGRID-ORCS" id="5201">
    <property type="hits" value="530 hits in 1157 CRISPR screens"/>
</dbReference>
<dbReference type="ChiTaRS" id="PFDN1">
    <property type="organism name" value="human"/>
</dbReference>
<dbReference type="GeneWiki" id="PFDN1"/>
<dbReference type="GenomeRNAi" id="5201"/>
<dbReference type="Pharos" id="O60925">
    <property type="development level" value="Tbio"/>
</dbReference>
<dbReference type="PRO" id="PR:O60925"/>
<dbReference type="Proteomes" id="UP000005640">
    <property type="component" value="Chromosome 5"/>
</dbReference>
<dbReference type="RNAct" id="O60925">
    <property type="molecule type" value="protein"/>
</dbReference>
<dbReference type="Bgee" id="ENSG00000113068">
    <property type="expression patterns" value="Expressed in calcaneal tendon and 205 other cell types or tissues"/>
</dbReference>
<dbReference type="ExpressionAtlas" id="O60925">
    <property type="expression patterns" value="baseline and differential"/>
</dbReference>
<dbReference type="GO" id="GO:0005737">
    <property type="term" value="C:cytoplasm"/>
    <property type="evidence" value="ECO:0000318"/>
    <property type="project" value="GO_Central"/>
</dbReference>
<dbReference type="GO" id="GO:0016272">
    <property type="term" value="C:prefoldin complex"/>
    <property type="evidence" value="ECO:0000314"/>
    <property type="project" value="FlyBase"/>
</dbReference>
<dbReference type="GO" id="GO:0001540">
    <property type="term" value="F:amyloid-beta binding"/>
    <property type="evidence" value="ECO:0000314"/>
    <property type="project" value="FlyBase"/>
</dbReference>
<dbReference type="GO" id="GO:0044183">
    <property type="term" value="F:protein folding chaperone"/>
    <property type="evidence" value="ECO:0000353"/>
    <property type="project" value="AgBase"/>
</dbReference>
<dbReference type="GO" id="GO:0051082">
    <property type="term" value="F:unfolded protein binding"/>
    <property type="evidence" value="ECO:0000314"/>
    <property type="project" value="FlyBase"/>
</dbReference>
<dbReference type="GO" id="GO:0061077">
    <property type="term" value="P:chaperone-mediated protein folding"/>
    <property type="evidence" value="ECO:0000303"/>
    <property type="project" value="ComplexPortal"/>
</dbReference>
<dbReference type="GO" id="GO:1905907">
    <property type="term" value="P:negative regulation of amyloid fibril formation"/>
    <property type="evidence" value="ECO:0000314"/>
    <property type="project" value="FlyBase"/>
</dbReference>
<dbReference type="GO" id="GO:0006457">
    <property type="term" value="P:protein folding"/>
    <property type="evidence" value="ECO:0000314"/>
    <property type="project" value="FlyBase"/>
</dbReference>
<dbReference type="CDD" id="cd23164">
    <property type="entry name" value="Prefoldin_1"/>
    <property type="match status" value="1"/>
</dbReference>
<dbReference type="FunFam" id="1.10.287.370:FF:000006">
    <property type="entry name" value="prefoldin subunit 1"/>
    <property type="match status" value="1"/>
</dbReference>
<dbReference type="Gene3D" id="1.10.287.370">
    <property type="match status" value="1"/>
</dbReference>
<dbReference type="InterPro" id="IPR002777">
    <property type="entry name" value="PFD_beta-like"/>
</dbReference>
<dbReference type="InterPro" id="IPR009053">
    <property type="entry name" value="Prefoldin"/>
</dbReference>
<dbReference type="PANTHER" id="PTHR20903:SF1">
    <property type="entry name" value="PREFOLDIN SUBUNIT 1"/>
    <property type="match status" value="1"/>
</dbReference>
<dbReference type="PANTHER" id="PTHR20903">
    <property type="entry name" value="PREFOLDIN SUBUNIT 1-RELATED"/>
    <property type="match status" value="1"/>
</dbReference>
<dbReference type="Pfam" id="PF01920">
    <property type="entry name" value="Prefoldin_2"/>
    <property type="match status" value="1"/>
</dbReference>
<dbReference type="SUPFAM" id="SSF46579">
    <property type="entry name" value="Prefoldin"/>
    <property type="match status" value="1"/>
</dbReference>
<reference key="1">
    <citation type="journal article" date="1998" name="Cell">
        <title>Prefoldin, a chaperone that delivers unfolded proteins to cytosolic chaperonin.</title>
        <authorList>
            <person name="Vainberg I.E."/>
            <person name="Lewis S.A."/>
            <person name="Rommelaere H."/>
            <person name="Ampe C."/>
            <person name="Vandekerckhove J."/>
            <person name="Klein H.L."/>
            <person name="Cowan N.J."/>
        </authorList>
    </citation>
    <scope>NUCLEOTIDE SEQUENCE [MRNA]</scope>
</reference>
<reference key="2">
    <citation type="journal article" date="2004" name="Nat. Genet.">
        <title>Complete sequencing and characterization of 21,243 full-length human cDNAs.</title>
        <authorList>
            <person name="Ota T."/>
            <person name="Suzuki Y."/>
            <person name="Nishikawa T."/>
            <person name="Otsuki T."/>
            <person name="Sugiyama T."/>
            <person name="Irie R."/>
            <person name="Wakamatsu A."/>
            <person name="Hayashi K."/>
            <person name="Sato H."/>
            <person name="Nagai K."/>
            <person name="Kimura K."/>
            <person name="Makita H."/>
            <person name="Sekine M."/>
            <person name="Obayashi M."/>
            <person name="Nishi T."/>
            <person name="Shibahara T."/>
            <person name="Tanaka T."/>
            <person name="Ishii S."/>
            <person name="Yamamoto J."/>
            <person name="Saito K."/>
            <person name="Kawai Y."/>
            <person name="Isono Y."/>
            <person name="Nakamura Y."/>
            <person name="Nagahari K."/>
            <person name="Murakami K."/>
            <person name="Yasuda T."/>
            <person name="Iwayanagi T."/>
            <person name="Wagatsuma M."/>
            <person name="Shiratori A."/>
            <person name="Sudo H."/>
            <person name="Hosoiri T."/>
            <person name="Kaku Y."/>
            <person name="Kodaira H."/>
            <person name="Kondo H."/>
            <person name="Sugawara M."/>
            <person name="Takahashi M."/>
            <person name="Kanda K."/>
            <person name="Yokoi T."/>
            <person name="Furuya T."/>
            <person name="Kikkawa E."/>
            <person name="Omura Y."/>
            <person name="Abe K."/>
            <person name="Kamihara K."/>
            <person name="Katsuta N."/>
            <person name="Sato K."/>
            <person name="Tanikawa M."/>
            <person name="Yamazaki M."/>
            <person name="Ninomiya K."/>
            <person name="Ishibashi T."/>
            <person name="Yamashita H."/>
            <person name="Murakawa K."/>
            <person name="Fujimori K."/>
            <person name="Tanai H."/>
            <person name="Kimata M."/>
            <person name="Watanabe M."/>
            <person name="Hiraoka S."/>
            <person name="Chiba Y."/>
            <person name="Ishida S."/>
            <person name="Ono Y."/>
            <person name="Takiguchi S."/>
            <person name="Watanabe S."/>
            <person name="Yosida M."/>
            <person name="Hotuta T."/>
            <person name="Kusano J."/>
            <person name="Kanehori K."/>
            <person name="Takahashi-Fujii A."/>
            <person name="Hara H."/>
            <person name="Tanase T.-O."/>
            <person name="Nomura Y."/>
            <person name="Togiya S."/>
            <person name="Komai F."/>
            <person name="Hara R."/>
            <person name="Takeuchi K."/>
            <person name="Arita M."/>
            <person name="Imose N."/>
            <person name="Musashino K."/>
            <person name="Yuuki H."/>
            <person name="Oshima A."/>
            <person name="Sasaki N."/>
            <person name="Aotsuka S."/>
            <person name="Yoshikawa Y."/>
            <person name="Matsunawa H."/>
            <person name="Ichihara T."/>
            <person name="Shiohata N."/>
            <person name="Sano S."/>
            <person name="Moriya S."/>
            <person name="Momiyama H."/>
            <person name="Satoh N."/>
            <person name="Takami S."/>
            <person name="Terashima Y."/>
            <person name="Suzuki O."/>
            <person name="Nakagawa S."/>
            <person name="Senoh A."/>
            <person name="Mizoguchi H."/>
            <person name="Goto Y."/>
            <person name="Shimizu F."/>
            <person name="Wakebe H."/>
            <person name="Hishigaki H."/>
            <person name="Watanabe T."/>
            <person name="Sugiyama A."/>
            <person name="Takemoto M."/>
            <person name="Kawakami B."/>
            <person name="Yamazaki M."/>
            <person name="Watanabe K."/>
            <person name="Kumagai A."/>
            <person name="Itakura S."/>
            <person name="Fukuzumi Y."/>
            <person name="Fujimori Y."/>
            <person name="Komiyama M."/>
            <person name="Tashiro H."/>
            <person name="Tanigami A."/>
            <person name="Fujiwara T."/>
            <person name="Ono T."/>
            <person name="Yamada K."/>
            <person name="Fujii Y."/>
            <person name="Ozaki K."/>
            <person name="Hirao M."/>
            <person name="Ohmori Y."/>
            <person name="Kawabata A."/>
            <person name="Hikiji T."/>
            <person name="Kobatake N."/>
            <person name="Inagaki H."/>
            <person name="Ikema Y."/>
            <person name="Okamoto S."/>
            <person name="Okitani R."/>
            <person name="Kawakami T."/>
            <person name="Noguchi S."/>
            <person name="Itoh T."/>
            <person name="Shigeta K."/>
            <person name="Senba T."/>
            <person name="Matsumura K."/>
            <person name="Nakajima Y."/>
            <person name="Mizuno T."/>
            <person name="Morinaga M."/>
            <person name="Sasaki M."/>
            <person name="Togashi T."/>
            <person name="Oyama M."/>
            <person name="Hata H."/>
            <person name="Watanabe M."/>
            <person name="Komatsu T."/>
            <person name="Mizushima-Sugano J."/>
            <person name="Satoh T."/>
            <person name="Shirai Y."/>
            <person name="Takahashi Y."/>
            <person name="Nakagawa K."/>
            <person name="Okumura K."/>
            <person name="Nagase T."/>
            <person name="Nomura N."/>
            <person name="Kikuchi H."/>
            <person name="Masuho Y."/>
            <person name="Yamashita R."/>
            <person name="Nakai K."/>
            <person name="Yada T."/>
            <person name="Nakamura Y."/>
            <person name="Ohara O."/>
            <person name="Isogai T."/>
            <person name="Sugano S."/>
        </authorList>
    </citation>
    <scope>NUCLEOTIDE SEQUENCE [LARGE SCALE MRNA]</scope>
</reference>
<reference key="3">
    <citation type="submission" date="2005-04" db="EMBL/GenBank/DDBJ databases">
        <authorList>
            <person name="Totoki Y."/>
            <person name="Toyoda A."/>
            <person name="Takeda T."/>
            <person name="Sakaki Y."/>
            <person name="Tanaka A."/>
            <person name="Yokoyama S."/>
        </authorList>
    </citation>
    <scope>NUCLEOTIDE SEQUENCE [LARGE SCALE MRNA]</scope>
    <source>
        <tissue>Thymus</tissue>
    </source>
</reference>
<reference key="4">
    <citation type="submission" date="2005-09" db="EMBL/GenBank/DDBJ databases">
        <authorList>
            <person name="Mural R.J."/>
            <person name="Istrail S."/>
            <person name="Sutton G.G."/>
            <person name="Florea L."/>
            <person name="Halpern A.L."/>
            <person name="Mobarry C.M."/>
            <person name="Lippert R."/>
            <person name="Walenz B."/>
            <person name="Shatkay H."/>
            <person name="Dew I."/>
            <person name="Miller J.R."/>
            <person name="Flanigan M.J."/>
            <person name="Edwards N.J."/>
            <person name="Bolanos R."/>
            <person name="Fasulo D."/>
            <person name="Halldorsson B.V."/>
            <person name="Hannenhalli S."/>
            <person name="Turner R."/>
            <person name="Yooseph S."/>
            <person name="Lu F."/>
            <person name="Nusskern D.R."/>
            <person name="Shue B.C."/>
            <person name="Zheng X.H."/>
            <person name="Zhong F."/>
            <person name="Delcher A.L."/>
            <person name="Huson D.H."/>
            <person name="Kravitz S.A."/>
            <person name="Mouchard L."/>
            <person name="Reinert K."/>
            <person name="Remington K.A."/>
            <person name="Clark A.G."/>
            <person name="Waterman M.S."/>
            <person name="Eichler E.E."/>
            <person name="Adams M.D."/>
            <person name="Hunkapiller M.W."/>
            <person name="Myers E.W."/>
            <person name="Venter J.C."/>
        </authorList>
    </citation>
    <scope>NUCLEOTIDE SEQUENCE [LARGE SCALE GENOMIC DNA]</scope>
</reference>
<reference key="5">
    <citation type="journal article" date="2004" name="Genome Res.">
        <title>The status, quality, and expansion of the NIH full-length cDNA project: the Mammalian Gene Collection (MGC).</title>
        <authorList>
            <consortium name="The MGC Project Team"/>
        </authorList>
    </citation>
    <scope>NUCLEOTIDE SEQUENCE [LARGE SCALE MRNA]</scope>
    <source>
        <tissue>Colon</tissue>
    </source>
</reference>
<reference key="6">
    <citation type="journal article" date="2009" name="Anal. Chem.">
        <title>Lys-N and trypsin cover complementary parts of the phosphoproteome in a refined SCX-based approach.</title>
        <authorList>
            <person name="Gauci S."/>
            <person name="Helbig A.O."/>
            <person name="Slijper M."/>
            <person name="Krijgsveld J."/>
            <person name="Heck A.J."/>
            <person name="Mohammed S."/>
        </authorList>
    </citation>
    <scope>ACETYLATION [LARGE SCALE ANALYSIS] AT ALA-2</scope>
    <scope>CLEAVAGE OF INITIATOR METHIONINE [LARGE SCALE ANALYSIS]</scope>
    <scope>IDENTIFICATION BY MASS SPECTROMETRY [LARGE SCALE ANALYSIS]</scope>
</reference>
<reference key="7">
    <citation type="journal article" date="2011" name="BMC Syst. Biol.">
        <title>Initial characterization of the human central proteome.</title>
        <authorList>
            <person name="Burkard T.R."/>
            <person name="Planyavsky M."/>
            <person name="Kaupe I."/>
            <person name="Breitwieser F.P."/>
            <person name="Buerckstuemmer T."/>
            <person name="Bennett K.L."/>
            <person name="Superti-Furga G."/>
            <person name="Colinge J."/>
        </authorList>
    </citation>
    <scope>IDENTIFICATION BY MASS SPECTROMETRY [LARGE SCALE ANALYSIS]</scope>
</reference>
<organism>
    <name type="scientific">Homo sapiens</name>
    <name type="common">Human</name>
    <dbReference type="NCBI Taxonomy" id="9606"/>
    <lineage>
        <taxon>Eukaryota</taxon>
        <taxon>Metazoa</taxon>
        <taxon>Chordata</taxon>
        <taxon>Craniata</taxon>
        <taxon>Vertebrata</taxon>
        <taxon>Euteleostomi</taxon>
        <taxon>Mammalia</taxon>
        <taxon>Eutheria</taxon>
        <taxon>Euarchontoglires</taxon>
        <taxon>Primates</taxon>
        <taxon>Haplorrhini</taxon>
        <taxon>Catarrhini</taxon>
        <taxon>Hominidae</taxon>
        <taxon>Homo</taxon>
    </lineage>
</organism>
<keyword id="KW-0002">3D-structure</keyword>
<keyword id="KW-0007">Acetylation</keyword>
<keyword id="KW-0143">Chaperone</keyword>
<keyword id="KW-1267">Proteomics identification</keyword>
<keyword id="KW-1185">Reference proteome</keyword>
<gene>
    <name type="primary">PFDN1</name>
    <name type="synonym">PFD1</name>
</gene>
<accession>O60925</accession>
<accession>B2RD02</accession>
<accession>Q53F95</accession>
<accession>Q96EX6</accession>